<name>GCS21_PAEAT</name>
<accession>A1R1K8</accession>
<reference key="1">
    <citation type="journal article" date="2006" name="PLoS Genet.">
        <title>Secrets of soil survival revealed by the genome sequence of Arthrobacter aurescens TC1.</title>
        <authorList>
            <person name="Mongodin E.F."/>
            <person name="Shapir N."/>
            <person name="Daugherty S.C."/>
            <person name="DeBoy R.T."/>
            <person name="Emerson J.B."/>
            <person name="Shvartzbeyn A."/>
            <person name="Radune D."/>
            <person name="Vamathevan J."/>
            <person name="Riggs F."/>
            <person name="Grinberg V."/>
            <person name="Khouri H.M."/>
            <person name="Wackett L.P."/>
            <person name="Nelson K.E."/>
            <person name="Sadowsky M.J."/>
        </authorList>
    </citation>
    <scope>NUCLEOTIDE SEQUENCE [LARGE SCALE GENOMIC DNA]</scope>
    <source>
        <strain>TC1</strain>
    </source>
</reference>
<feature type="chain" id="PRO_0000291481" description="Putative glutamate--cysteine ligase 2-1">
    <location>
        <begin position="1"/>
        <end position="384"/>
    </location>
</feature>
<sequence>MGRVAVRTFGVEEELLIADPVDGMPLALASGILDVAGFSETDNSSDAGPSLKSEFKQEQIEVNSLPCRTAKELRAEIRAGRALADSAARAVGARVAALATPPVFHATPTAGNQRYAAMGTEFGLISREQLTCGFHVHVSIESPEEGVAVLDRMRHWLPVLLALSANSPFWMGADTGFASYRTQIWNRWPTAGPMDVFGSADGYRQVLSELLGTGVPLDEGMIYFDARLSRGHPTVEVRIADVCLYAEDALTIAILARALVETSASEWRKGEPPSGVMTPVIRMANWKASRFGVTNQLLHPLEQAPFAAADVAGALLRHIRRALTESGDLALARTGVANILRRGTGERLQRQAYGRRFRLSDVVSTAIASTHNYGERSDAGLLSR</sequence>
<keyword id="KW-0067">ATP-binding</keyword>
<keyword id="KW-0436">Ligase</keyword>
<keyword id="KW-0547">Nucleotide-binding</keyword>
<evidence type="ECO:0000255" key="1">
    <source>
        <dbReference type="HAMAP-Rule" id="MF_01609"/>
    </source>
</evidence>
<organism>
    <name type="scientific">Paenarthrobacter aurescens (strain TC1)</name>
    <dbReference type="NCBI Taxonomy" id="290340"/>
    <lineage>
        <taxon>Bacteria</taxon>
        <taxon>Bacillati</taxon>
        <taxon>Actinomycetota</taxon>
        <taxon>Actinomycetes</taxon>
        <taxon>Micrococcales</taxon>
        <taxon>Micrococcaceae</taxon>
        <taxon>Paenarthrobacter</taxon>
    </lineage>
</organism>
<proteinExistence type="inferred from homology"/>
<comment type="function">
    <text evidence="1">ATP-dependent carboxylate-amine ligase which exhibits weak glutamate--cysteine ligase activity.</text>
</comment>
<comment type="catalytic activity">
    <reaction evidence="1">
        <text>L-cysteine + L-glutamate + ATP = gamma-L-glutamyl-L-cysteine + ADP + phosphate + H(+)</text>
        <dbReference type="Rhea" id="RHEA:13285"/>
        <dbReference type="ChEBI" id="CHEBI:15378"/>
        <dbReference type="ChEBI" id="CHEBI:29985"/>
        <dbReference type="ChEBI" id="CHEBI:30616"/>
        <dbReference type="ChEBI" id="CHEBI:35235"/>
        <dbReference type="ChEBI" id="CHEBI:43474"/>
        <dbReference type="ChEBI" id="CHEBI:58173"/>
        <dbReference type="ChEBI" id="CHEBI:456216"/>
        <dbReference type="EC" id="6.3.2.2"/>
    </reaction>
</comment>
<comment type="similarity">
    <text evidence="1">Belongs to the glutamate--cysteine ligase type 2 family. YbdK subfamily.</text>
</comment>
<dbReference type="EC" id="6.3.2.2" evidence="1"/>
<dbReference type="EMBL" id="CP000474">
    <property type="protein sequence ID" value="ABM09426.1"/>
    <property type="molecule type" value="Genomic_DNA"/>
</dbReference>
<dbReference type="SMR" id="A1R1K8"/>
<dbReference type="STRING" id="290340.AAur_0300"/>
<dbReference type="KEGG" id="aau:AAur_0300"/>
<dbReference type="eggNOG" id="COG2170">
    <property type="taxonomic scope" value="Bacteria"/>
</dbReference>
<dbReference type="HOGENOM" id="CLU_044848_1_0_11"/>
<dbReference type="Proteomes" id="UP000000637">
    <property type="component" value="Chromosome"/>
</dbReference>
<dbReference type="GO" id="GO:0005524">
    <property type="term" value="F:ATP binding"/>
    <property type="evidence" value="ECO:0007669"/>
    <property type="project" value="UniProtKB-KW"/>
</dbReference>
<dbReference type="GO" id="GO:0004357">
    <property type="term" value="F:glutamate-cysteine ligase activity"/>
    <property type="evidence" value="ECO:0007669"/>
    <property type="project" value="UniProtKB-EC"/>
</dbReference>
<dbReference type="GO" id="GO:0042398">
    <property type="term" value="P:modified amino acid biosynthetic process"/>
    <property type="evidence" value="ECO:0007669"/>
    <property type="project" value="InterPro"/>
</dbReference>
<dbReference type="Gene3D" id="3.30.590.20">
    <property type="match status" value="1"/>
</dbReference>
<dbReference type="HAMAP" id="MF_01609">
    <property type="entry name" value="Glu_cys_ligase_2"/>
    <property type="match status" value="1"/>
</dbReference>
<dbReference type="InterPro" id="IPR050141">
    <property type="entry name" value="GCL_type2/YbdK_subfam"/>
</dbReference>
<dbReference type="InterPro" id="IPR006336">
    <property type="entry name" value="GCS2"/>
</dbReference>
<dbReference type="InterPro" id="IPR014746">
    <property type="entry name" value="Gln_synth/guanido_kin_cat_dom"/>
</dbReference>
<dbReference type="InterPro" id="IPR011793">
    <property type="entry name" value="YbdK"/>
</dbReference>
<dbReference type="NCBIfam" id="TIGR02050">
    <property type="entry name" value="gshA_cyan_rel"/>
    <property type="match status" value="1"/>
</dbReference>
<dbReference type="NCBIfam" id="NF010041">
    <property type="entry name" value="PRK13517.1-1"/>
    <property type="match status" value="1"/>
</dbReference>
<dbReference type="PANTHER" id="PTHR36510">
    <property type="entry name" value="GLUTAMATE--CYSTEINE LIGASE 2-RELATED"/>
    <property type="match status" value="1"/>
</dbReference>
<dbReference type="PANTHER" id="PTHR36510:SF1">
    <property type="entry name" value="GLUTAMATE--CYSTEINE LIGASE 2-RELATED"/>
    <property type="match status" value="1"/>
</dbReference>
<dbReference type="Pfam" id="PF04107">
    <property type="entry name" value="GCS2"/>
    <property type="match status" value="1"/>
</dbReference>
<dbReference type="SUPFAM" id="SSF55931">
    <property type="entry name" value="Glutamine synthetase/guanido kinase"/>
    <property type="match status" value="1"/>
</dbReference>
<gene>
    <name type="ordered locus">AAur_0300</name>
</gene>
<protein>
    <recommendedName>
        <fullName evidence="1">Putative glutamate--cysteine ligase 2-1</fullName>
        <ecNumber evidence="1">6.3.2.2</ecNumber>
    </recommendedName>
    <alternativeName>
        <fullName evidence="1">Gamma-glutamylcysteine synthetase 2-1</fullName>
        <shortName evidence="1">GCS 2-1</shortName>
        <shortName evidence="1">Gamma-GCS 2-1</shortName>
    </alternativeName>
</protein>